<accession>Q3YWC7</accession>
<feature type="chain" id="PRO_0000226895" description="Putative transport protein YidE">
    <location>
        <begin position="1"/>
        <end position="553"/>
    </location>
</feature>
<feature type="transmembrane region" description="Helical" evidence="1">
    <location>
        <begin position="4"/>
        <end position="24"/>
    </location>
</feature>
<feature type="transmembrane region" description="Helical" evidence="1">
    <location>
        <begin position="28"/>
        <end position="48"/>
    </location>
</feature>
<feature type="transmembrane region" description="Helical" evidence="1">
    <location>
        <begin position="65"/>
        <end position="85"/>
    </location>
</feature>
<feature type="transmembrane region" description="Helical" evidence="1">
    <location>
        <begin position="95"/>
        <end position="115"/>
    </location>
</feature>
<feature type="transmembrane region" description="Helical" evidence="1">
    <location>
        <begin position="158"/>
        <end position="178"/>
    </location>
</feature>
<feature type="transmembrane region" description="Helical" evidence="1">
    <location>
        <begin position="371"/>
        <end position="391"/>
    </location>
</feature>
<feature type="transmembrane region" description="Helical" evidence="1">
    <location>
        <begin position="393"/>
        <end position="413"/>
    </location>
</feature>
<feature type="transmembrane region" description="Helical" evidence="1">
    <location>
        <begin position="431"/>
        <end position="448"/>
    </location>
</feature>
<feature type="transmembrane region" description="Helical" evidence="1">
    <location>
        <begin position="464"/>
        <end position="484"/>
    </location>
</feature>
<feature type="transmembrane region" description="Helical" evidence="1">
    <location>
        <begin position="493"/>
        <end position="513"/>
    </location>
</feature>
<feature type="transmembrane region" description="Helical" evidence="1">
    <location>
        <begin position="533"/>
        <end position="553"/>
    </location>
</feature>
<feature type="domain" description="RCK C-terminal 1" evidence="1">
    <location>
        <begin position="191"/>
        <end position="276"/>
    </location>
</feature>
<feature type="domain" description="RCK C-terminal 2" evidence="1">
    <location>
        <begin position="279"/>
        <end position="361"/>
    </location>
</feature>
<proteinExistence type="inferred from homology"/>
<keyword id="KW-1003">Cell membrane</keyword>
<keyword id="KW-0472">Membrane</keyword>
<keyword id="KW-1185">Reference proteome</keyword>
<keyword id="KW-0677">Repeat</keyword>
<keyword id="KW-0812">Transmembrane</keyword>
<keyword id="KW-1133">Transmembrane helix</keyword>
<keyword id="KW-0813">Transport</keyword>
<organism>
    <name type="scientific">Shigella sonnei (strain Ss046)</name>
    <dbReference type="NCBI Taxonomy" id="300269"/>
    <lineage>
        <taxon>Bacteria</taxon>
        <taxon>Pseudomonadati</taxon>
        <taxon>Pseudomonadota</taxon>
        <taxon>Gammaproteobacteria</taxon>
        <taxon>Enterobacterales</taxon>
        <taxon>Enterobacteriaceae</taxon>
        <taxon>Shigella</taxon>
    </lineage>
</organism>
<evidence type="ECO:0000255" key="1">
    <source>
        <dbReference type="HAMAP-Rule" id="MF_01016"/>
    </source>
</evidence>
<evidence type="ECO:0000305" key="2"/>
<protein>
    <recommendedName>
        <fullName evidence="1">Putative transport protein YidE</fullName>
    </recommendedName>
</protein>
<comment type="subcellular location">
    <subcellularLocation>
        <location evidence="1">Cell membrane</location>
        <topology evidence="1">Multi-pass membrane protein</topology>
    </subcellularLocation>
</comment>
<comment type="similarity">
    <text evidence="1">Belongs to the AAE transporter (TC 2.A.81) family. YidE subfamily.</text>
</comment>
<comment type="sequence caution" evidence="2">
    <conflict type="erroneous initiation">
        <sequence resource="EMBL-CDS" id="AAZ90185"/>
    </conflict>
</comment>
<dbReference type="EMBL" id="CP000038">
    <property type="protein sequence ID" value="AAZ90185.1"/>
    <property type="status" value="ALT_INIT"/>
    <property type="molecule type" value="Genomic_DNA"/>
</dbReference>
<dbReference type="RefSeq" id="WP_001279748.1">
    <property type="nucleotide sequence ID" value="NC_007384.1"/>
</dbReference>
<dbReference type="SMR" id="Q3YWC7"/>
<dbReference type="KEGG" id="ssn:SSON_3636"/>
<dbReference type="HOGENOM" id="CLU_035023_3_1_6"/>
<dbReference type="Proteomes" id="UP000002529">
    <property type="component" value="Chromosome"/>
</dbReference>
<dbReference type="GO" id="GO:0005886">
    <property type="term" value="C:plasma membrane"/>
    <property type="evidence" value="ECO:0007669"/>
    <property type="project" value="UniProtKB-SubCell"/>
</dbReference>
<dbReference type="GO" id="GO:0008324">
    <property type="term" value="F:monoatomic cation transmembrane transporter activity"/>
    <property type="evidence" value="ECO:0007669"/>
    <property type="project" value="InterPro"/>
</dbReference>
<dbReference type="GO" id="GO:0006813">
    <property type="term" value="P:potassium ion transport"/>
    <property type="evidence" value="ECO:0007669"/>
    <property type="project" value="InterPro"/>
</dbReference>
<dbReference type="FunFam" id="3.30.70.1450:FF:000004">
    <property type="entry name" value="Putative transport protein YidE"/>
    <property type="match status" value="1"/>
</dbReference>
<dbReference type="Gene3D" id="3.30.70.1450">
    <property type="entry name" value="Regulator of K+ conductance, C-terminal domain"/>
    <property type="match status" value="2"/>
</dbReference>
<dbReference type="HAMAP" id="MF_01016">
    <property type="entry name" value="YidE"/>
    <property type="match status" value="1"/>
</dbReference>
<dbReference type="InterPro" id="IPR050144">
    <property type="entry name" value="AAE_transporter"/>
</dbReference>
<dbReference type="InterPro" id="IPR006037">
    <property type="entry name" value="RCK_C"/>
</dbReference>
<dbReference type="InterPro" id="IPR036721">
    <property type="entry name" value="RCK_C_sf"/>
</dbReference>
<dbReference type="InterPro" id="IPR023018">
    <property type="entry name" value="Transpt_YidE_put"/>
</dbReference>
<dbReference type="InterPro" id="IPR006512">
    <property type="entry name" value="YidE_YbjL"/>
</dbReference>
<dbReference type="NCBIfam" id="NF003007">
    <property type="entry name" value="PRK03818.1"/>
    <property type="match status" value="1"/>
</dbReference>
<dbReference type="NCBIfam" id="TIGR01625">
    <property type="entry name" value="YidE_YbjL_dupl"/>
    <property type="match status" value="2"/>
</dbReference>
<dbReference type="PANTHER" id="PTHR30445">
    <property type="entry name" value="K(+)_H(+) ANTIPORTER SUBUNIT KHTT"/>
    <property type="match status" value="1"/>
</dbReference>
<dbReference type="PANTHER" id="PTHR30445:SF3">
    <property type="entry name" value="TRANSPORT PROTEIN YIDE-RELATED"/>
    <property type="match status" value="1"/>
</dbReference>
<dbReference type="Pfam" id="PF06826">
    <property type="entry name" value="Asp-Al_Ex"/>
    <property type="match status" value="2"/>
</dbReference>
<dbReference type="Pfam" id="PF02080">
    <property type="entry name" value="TrkA_C"/>
    <property type="match status" value="2"/>
</dbReference>
<dbReference type="SUPFAM" id="SSF116726">
    <property type="entry name" value="TrkA C-terminal domain-like"/>
    <property type="match status" value="2"/>
</dbReference>
<dbReference type="PROSITE" id="PS51202">
    <property type="entry name" value="RCK_C"/>
    <property type="match status" value="2"/>
</dbReference>
<name>YIDE_SHISS</name>
<sequence length="553" mass="59013">MSDIALTVSILALVAVVGLFIGNVKFRGIGLGIGGVLFGGIIVGHFVSQAGMTLSSDMLHVIQEFGLILFVYTIGIQVGPGFFASLRVSGLRLNLFAVLIVIIGGLVTAILHKLFDIPLPVVLGIFSGAVTNTPALGAGQQILRDLGTPMEMVDQMGMSYAMAYPFGICGILFTMWMLRVIFRVNVETEAQQHESSRTNGGALIKTINIRVENPNLHDLAIKDVPILNGDKIICSRLKREETLKVPSPDTIIQLGDLLHLVGQPADLHNAQLVIGQEVDTSLSTKDTDLRVERVVVTNENVLGKRIRDLHFKERYDVVISRLNRAGVELVASGDISLQFGDILNLVGRPSAIDAVANVLGNAQQKLQQVQMLPVFIGIGLGVLLGSIPVFVPGFPAALKLGLAGGLLIMALILGRIGSIGKLYWFMPPSANLALRELGIVLFLSVVGLKSGGDFVNTLVNGEGLSWIGYGALITAVPLITVGILARMLAKMNYLTMCGMLAGSMTDPPALAFANNLHPTSGAAALSYATVYPLVMFLRIITPQLLAVLFWSIG</sequence>
<reference key="1">
    <citation type="journal article" date="2005" name="Nucleic Acids Res.">
        <title>Genome dynamics and diversity of Shigella species, the etiologic agents of bacillary dysentery.</title>
        <authorList>
            <person name="Yang F."/>
            <person name="Yang J."/>
            <person name="Zhang X."/>
            <person name="Chen L."/>
            <person name="Jiang Y."/>
            <person name="Yan Y."/>
            <person name="Tang X."/>
            <person name="Wang J."/>
            <person name="Xiong Z."/>
            <person name="Dong J."/>
            <person name="Xue Y."/>
            <person name="Zhu Y."/>
            <person name="Xu X."/>
            <person name="Sun L."/>
            <person name="Chen S."/>
            <person name="Nie H."/>
            <person name="Peng J."/>
            <person name="Xu J."/>
            <person name="Wang Y."/>
            <person name="Yuan Z."/>
            <person name="Wen Y."/>
            <person name="Yao Z."/>
            <person name="Shen Y."/>
            <person name="Qiang B."/>
            <person name="Hou Y."/>
            <person name="Yu J."/>
            <person name="Jin Q."/>
        </authorList>
    </citation>
    <scope>NUCLEOTIDE SEQUENCE [LARGE SCALE GENOMIC DNA]</scope>
    <source>
        <strain>Ss046</strain>
    </source>
</reference>
<gene>
    <name evidence="1" type="primary">yidE</name>
    <name type="ordered locus">SSON_3636</name>
</gene>